<gene>
    <name type="primary">MT-CYB</name>
    <name type="synonym">COB</name>
    <name type="synonym">CYTB</name>
    <name type="synonym">MTCYB</name>
</gene>
<geneLocation type="mitochondrion"/>
<keyword id="KW-0249">Electron transport</keyword>
<keyword id="KW-0349">Heme</keyword>
<keyword id="KW-0408">Iron</keyword>
<keyword id="KW-0472">Membrane</keyword>
<keyword id="KW-0479">Metal-binding</keyword>
<keyword id="KW-0496">Mitochondrion</keyword>
<keyword id="KW-0999">Mitochondrion inner membrane</keyword>
<keyword id="KW-0679">Respiratory chain</keyword>
<keyword id="KW-0812">Transmembrane</keyword>
<keyword id="KW-1133">Transmembrane helix</keyword>
<keyword id="KW-0813">Transport</keyword>
<keyword id="KW-0830">Ubiquinone</keyword>
<feature type="chain" id="PRO_0000060834" description="Cytochrome b">
    <location>
        <begin position="1"/>
        <end position="379"/>
    </location>
</feature>
<feature type="transmembrane region" description="Helical" evidence="2">
    <location>
        <begin position="33"/>
        <end position="53"/>
    </location>
</feature>
<feature type="transmembrane region" description="Helical" evidence="2">
    <location>
        <begin position="77"/>
        <end position="98"/>
    </location>
</feature>
<feature type="transmembrane region" description="Helical" evidence="2">
    <location>
        <begin position="113"/>
        <end position="133"/>
    </location>
</feature>
<feature type="transmembrane region" description="Helical" evidence="2">
    <location>
        <begin position="178"/>
        <end position="198"/>
    </location>
</feature>
<feature type="transmembrane region" description="Helical" evidence="2">
    <location>
        <begin position="226"/>
        <end position="246"/>
    </location>
</feature>
<feature type="transmembrane region" description="Helical" evidence="2">
    <location>
        <begin position="288"/>
        <end position="308"/>
    </location>
</feature>
<feature type="transmembrane region" description="Helical" evidence="2">
    <location>
        <begin position="320"/>
        <end position="340"/>
    </location>
</feature>
<feature type="transmembrane region" description="Helical" evidence="2">
    <location>
        <begin position="347"/>
        <end position="367"/>
    </location>
</feature>
<feature type="binding site" description="axial binding residue" evidence="2">
    <location>
        <position position="83"/>
    </location>
    <ligand>
        <name>heme b</name>
        <dbReference type="ChEBI" id="CHEBI:60344"/>
        <label>b562</label>
    </ligand>
    <ligandPart>
        <name>Fe</name>
        <dbReference type="ChEBI" id="CHEBI:18248"/>
    </ligandPart>
</feature>
<feature type="binding site" description="axial binding residue" evidence="2">
    <location>
        <position position="97"/>
    </location>
    <ligand>
        <name>heme b</name>
        <dbReference type="ChEBI" id="CHEBI:60344"/>
        <label>b566</label>
    </ligand>
    <ligandPart>
        <name>Fe</name>
        <dbReference type="ChEBI" id="CHEBI:18248"/>
    </ligandPart>
</feature>
<feature type="binding site" description="axial binding residue" evidence="2">
    <location>
        <position position="182"/>
    </location>
    <ligand>
        <name>heme b</name>
        <dbReference type="ChEBI" id="CHEBI:60344"/>
        <label>b562</label>
    </ligand>
    <ligandPart>
        <name>Fe</name>
        <dbReference type="ChEBI" id="CHEBI:18248"/>
    </ligandPart>
</feature>
<feature type="binding site" description="axial binding residue" evidence="2">
    <location>
        <position position="196"/>
    </location>
    <ligand>
        <name>heme b</name>
        <dbReference type="ChEBI" id="CHEBI:60344"/>
        <label>b566</label>
    </ligand>
    <ligandPart>
        <name>Fe</name>
        <dbReference type="ChEBI" id="CHEBI:18248"/>
    </ligandPart>
</feature>
<feature type="binding site" evidence="2">
    <location>
        <position position="201"/>
    </location>
    <ligand>
        <name>a ubiquinone</name>
        <dbReference type="ChEBI" id="CHEBI:16389"/>
    </ligand>
</feature>
<dbReference type="EMBL" id="AB077074">
    <property type="protein sequence ID" value="BAB88574.1"/>
    <property type="molecule type" value="Genomic_DNA"/>
</dbReference>
<dbReference type="SMR" id="Q8SJX4"/>
<dbReference type="GO" id="GO:0005743">
    <property type="term" value="C:mitochondrial inner membrane"/>
    <property type="evidence" value="ECO:0007669"/>
    <property type="project" value="UniProtKB-SubCell"/>
</dbReference>
<dbReference type="GO" id="GO:0045275">
    <property type="term" value="C:respiratory chain complex III"/>
    <property type="evidence" value="ECO:0007669"/>
    <property type="project" value="InterPro"/>
</dbReference>
<dbReference type="GO" id="GO:0046872">
    <property type="term" value="F:metal ion binding"/>
    <property type="evidence" value="ECO:0007669"/>
    <property type="project" value="UniProtKB-KW"/>
</dbReference>
<dbReference type="GO" id="GO:0008121">
    <property type="term" value="F:ubiquinol-cytochrome-c reductase activity"/>
    <property type="evidence" value="ECO:0007669"/>
    <property type="project" value="InterPro"/>
</dbReference>
<dbReference type="GO" id="GO:0006122">
    <property type="term" value="P:mitochondrial electron transport, ubiquinol to cytochrome c"/>
    <property type="evidence" value="ECO:0007669"/>
    <property type="project" value="TreeGrafter"/>
</dbReference>
<dbReference type="CDD" id="cd00290">
    <property type="entry name" value="cytochrome_b_C"/>
    <property type="match status" value="1"/>
</dbReference>
<dbReference type="CDD" id="cd00284">
    <property type="entry name" value="Cytochrome_b_N"/>
    <property type="match status" value="1"/>
</dbReference>
<dbReference type="FunFam" id="1.20.810.10:FF:000002">
    <property type="entry name" value="Cytochrome b"/>
    <property type="match status" value="1"/>
</dbReference>
<dbReference type="Gene3D" id="1.20.810.10">
    <property type="entry name" value="Cytochrome Bc1 Complex, Chain C"/>
    <property type="match status" value="1"/>
</dbReference>
<dbReference type="InterPro" id="IPR005798">
    <property type="entry name" value="Cyt_b/b6_C"/>
</dbReference>
<dbReference type="InterPro" id="IPR036150">
    <property type="entry name" value="Cyt_b/b6_C_sf"/>
</dbReference>
<dbReference type="InterPro" id="IPR005797">
    <property type="entry name" value="Cyt_b/b6_N"/>
</dbReference>
<dbReference type="InterPro" id="IPR027387">
    <property type="entry name" value="Cytb/b6-like_sf"/>
</dbReference>
<dbReference type="InterPro" id="IPR030689">
    <property type="entry name" value="Cytochrome_b"/>
</dbReference>
<dbReference type="InterPro" id="IPR048260">
    <property type="entry name" value="Cytochrome_b_C_euk/bac"/>
</dbReference>
<dbReference type="InterPro" id="IPR048259">
    <property type="entry name" value="Cytochrome_b_N_euk/bac"/>
</dbReference>
<dbReference type="InterPro" id="IPR016174">
    <property type="entry name" value="Di-haem_cyt_TM"/>
</dbReference>
<dbReference type="PANTHER" id="PTHR19271">
    <property type="entry name" value="CYTOCHROME B"/>
    <property type="match status" value="1"/>
</dbReference>
<dbReference type="PANTHER" id="PTHR19271:SF16">
    <property type="entry name" value="CYTOCHROME B"/>
    <property type="match status" value="1"/>
</dbReference>
<dbReference type="Pfam" id="PF00032">
    <property type="entry name" value="Cytochrom_B_C"/>
    <property type="match status" value="1"/>
</dbReference>
<dbReference type="Pfam" id="PF00033">
    <property type="entry name" value="Cytochrome_B"/>
    <property type="match status" value="1"/>
</dbReference>
<dbReference type="PIRSF" id="PIRSF038885">
    <property type="entry name" value="COB"/>
    <property type="match status" value="1"/>
</dbReference>
<dbReference type="SUPFAM" id="SSF81648">
    <property type="entry name" value="a domain/subunit of cytochrome bc1 complex (Ubiquinol-cytochrome c reductase)"/>
    <property type="match status" value="1"/>
</dbReference>
<dbReference type="SUPFAM" id="SSF81342">
    <property type="entry name" value="Transmembrane di-heme cytochromes"/>
    <property type="match status" value="1"/>
</dbReference>
<dbReference type="PROSITE" id="PS51003">
    <property type="entry name" value="CYTB_CTER"/>
    <property type="match status" value="1"/>
</dbReference>
<dbReference type="PROSITE" id="PS51002">
    <property type="entry name" value="CYTB_NTER"/>
    <property type="match status" value="1"/>
</dbReference>
<reference key="1">
    <citation type="journal article" date="2004" name="J. Mammal.">
        <title>Molecular phylogenetics of crocidura shrews (insectivora) in east and central Asia.</title>
        <authorList>
            <person name="Ohdachi S.D."/>
            <person name="Iwasa M.A."/>
            <person name="Nesterenko V.A."/>
            <person name="Abe H."/>
            <person name="Masuda R."/>
            <person name="Haberl W."/>
        </authorList>
    </citation>
    <scope>NUCLEOTIDE SEQUENCE [GENOMIC DNA]</scope>
</reference>
<comment type="function">
    <text evidence="2">Component of the ubiquinol-cytochrome c reductase complex (complex III or cytochrome b-c1 complex) that is part of the mitochondrial respiratory chain. The b-c1 complex mediates electron transfer from ubiquinol to cytochrome c. Contributes to the generation of a proton gradient across the mitochondrial membrane that is then used for ATP synthesis.</text>
</comment>
<comment type="cofactor">
    <cofactor evidence="2">
        <name>heme b</name>
        <dbReference type="ChEBI" id="CHEBI:60344"/>
    </cofactor>
    <text evidence="2">Binds 2 heme b groups non-covalently.</text>
</comment>
<comment type="subunit">
    <text evidence="2">The cytochrome bc1 complex contains 11 subunits: 3 respiratory subunits (MT-CYB, CYC1 and UQCRFS1), 2 core proteins (UQCRC1 and UQCRC2) and 6 low-molecular weight proteins (UQCRH/QCR6, UQCRB/QCR7, UQCRQ/QCR8, UQCR10/QCR9, UQCR11/QCR10 and a cleavage product of UQCRFS1). This cytochrome bc1 complex then forms a dimer.</text>
</comment>
<comment type="subcellular location">
    <subcellularLocation>
        <location evidence="2">Mitochondrion inner membrane</location>
        <topology evidence="2">Multi-pass membrane protein</topology>
    </subcellularLocation>
</comment>
<comment type="miscellaneous">
    <text evidence="1">Heme 1 (or BL or b562) is low-potential and absorbs at about 562 nm, and heme 2 (or BH or b566) is high-potential and absorbs at about 566 nm.</text>
</comment>
<comment type="similarity">
    <text evidence="3 4">Belongs to the cytochrome b family.</text>
</comment>
<comment type="caution">
    <text evidence="2">The full-length protein contains only eight transmembrane helices, not nine as predicted by bioinformatics tools.</text>
</comment>
<proteinExistence type="inferred from homology"/>
<name>CYB_CROWA</name>
<accession>Q8SJX4</accession>
<organism>
    <name type="scientific">Crocidura watasei</name>
    <name type="common">Lesser Ryukyu shrew</name>
    <name type="synonym">Crocidura horsfieldii watasei</name>
    <dbReference type="NCBI Taxonomy" id="167045"/>
    <lineage>
        <taxon>Eukaryota</taxon>
        <taxon>Metazoa</taxon>
        <taxon>Chordata</taxon>
        <taxon>Craniata</taxon>
        <taxon>Vertebrata</taxon>
        <taxon>Euteleostomi</taxon>
        <taxon>Mammalia</taxon>
        <taxon>Eutheria</taxon>
        <taxon>Laurasiatheria</taxon>
        <taxon>Eulipotyphla</taxon>
        <taxon>Soricidae</taxon>
        <taxon>Crocidurinae</taxon>
        <taxon>Crocidura</taxon>
    </lineage>
</organism>
<protein>
    <recommendedName>
        <fullName>Cytochrome b</fullName>
    </recommendedName>
    <alternativeName>
        <fullName>Complex III subunit 3</fullName>
    </alternativeName>
    <alternativeName>
        <fullName>Complex III subunit III</fullName>
    </alternativeName>
    <alternativeName>
        <fullName>Cytochrome b-c1 complex subunit 3</fullName>
    </alternativeName>
    <alternativeName>
        <fullName>Ubiquinol-cytochrome-c reductase complex cytochrome b subunit</fullName>
    </alternativeName>
</protein>
<sequence length="379" mass="42684">MNNIRKTHPLMKIVNSSFIDLPAPSNISSWWNFGSLLGICLIMQILTGLFLAMHYTSDTMTAFSSVTHICRDVNYGWLIRYLHANGASMFFICLFLHVGRGLYYGSYMYLETWNIGVLLLFAVMATAFMGYVLPWGQMSFWGATVITNLLSAIPYIGTNLVEWIWGGFSVDKATLTRFFAFHFILPFIVAALAGVHLLFLHETGSNNPSGLNSDTDKIPFHPYYTIKDILGVLILIATLSSLVLFSPDMLGDPDNYIPANPLNTPPHIKPEWYFLFAYAILRSIPNKLGGVLALVLSIAILTIIPLLHMAKQRSMMFRPMSQCLFWILVADLLTLTWIGGQPVEHPFVIIGQLASVIYFMLILLIMPITSMIENQLLKW</sequence>
<evidence type="ECO:0000250" key="1"/>
<evidence type="ECO:0000250" key="2">
    <source>
        <dbReference type="UniProtKB" id="P00157"/>
    </source>
</evidence>
<evidence type="ECO:0000255" key="3">
    <source>
        <dbReference type="PROSITE-ProRule" id="PRU00967"/>
    </source>
</evidence>
<evidence type="ECO:0000255" key="4">
    <source>
        <dbReference type="PROSITE-ProRule" id="PRU00968"/>
    </source>
</evidence>